<sequence>MEMMVHGRRDEQYGGLGLGLGLGLSLGVAGGAADDEQPPPRRGAAPPPQQQLCGWNGGGLFSSSSSDHRGRSAMMACHDVIEMPFLRGIDVNRAPAAETTTTTARGPSCSEEDEEPGASSPNSTLSSLSGKRGAPSAATAAAAAASDDEDSGGGSRKKLRLSKDQAAVLEDTFKEHNTLNPKQKAALARQLNLKPRQVEVWFQNRRARTKLKQTEVDCELLKRCCETLTDENRRLHRELQELRALKLATAAAAPHHLYGARVPPPTTLTMCPSCERVASAATTTRNNSGAAPARPVPTRPWPPAAAQRSSA</sequence>
<proteinExistence type="evidence at protein level"/>
<organism>
    <name type="scientific">Oryza sativa subsp. indica</name>
    <name type="common">Rice</name>
    <dbReference type="NCBI Taxonomy" id="39946"/>
    <lineage>
        <taxon>Eukaryota</taxon>
        <taxon>Viridiplantae</taxon>
        <taxon>Streptophyta</taxon>
        <taxon>Embryophyta</taxon>
        <taxon>Tracheophyta</taxon>
        <taxon>Spermatophyta</taxon>
        <taxon>Magnoliopsida</taxon>
        <taxon>Liliopsida</taxon>
        <taxon>Poales</taxon>
        <taxon>Poaceae</taxon>
        <taxon>BOP clade</taxon>
        <taxon>Oryzoideae</taxon>
        <taxon>Oryzeae</taxon>
        <taxon>Oryzinae</taxon>
        <taxon>Oryza</taxon>
        <taxon>Oryza sativa</taxon>
    </lineage>
</organism>
<gene>
    <name type="primary">HOX1</name>
    <name type="ORF">OsI_033480</name>
</gene>
<reference key="1">
    <citation type="journal article" date="1997" name="Plant J.">
        <title>Transcriptional repression by Oshox1, a novel homeodomain leucine zipper protein from rice.</title>
        <authorList>
            <person name="Meijer A.H."/>
            <person name="Scarpella E."/>
            <person name="van Dijk E.L."/>
            <person name="Qin L."/>
            <person name="Taal A.J.C."/>
            <person name="Rueb S."/>
            <person name="Harrington S.E."/>
            <person name="McCouch S.R."/>
            <person name="Schilperoort R.A."/>
            <person name="Hoge J.H.C."/>
        </authorList>
    </citation>
    <scope>NUCLEOTIDE SEQUENCE [MRNA]</scope>
    <scope>FUNCTION</scope>
    <scope>SUBUNIT</scope>
    <scope>TISSUE SPECIFICITY</scope>
    <source>
        <strain>cv. IR58</strain>
        <tissue>Etiolated seedling</tissue>
    </source>
</reference>
<reference key="2">
    <citation type="journal article" date="2000" name="Development">
        <title>A role for the rice homeobox gene Oshox1 in provascular cell fate commitment.</title>
        <authorList>
            <person name="Scarpella E."/>
            <person name="Rueb S."/>
            <person name="Boot K.J.M."/>
            <person name="Hoge J.H.C."/>
            <person name="Meijer A.H."/>
        </authorList>
    </citation>
    <scope>NUCLEOTIDE SEQUENCE [GENOMIC DNA]</scope>
    <scope>FUNCTION</scope>
    <scope>TISSUE SPECIFICITY</scope>
    <scope>INDUCTION</scope>
    <source>
        <strain>cv. IR58</strain>
    </source>
</reference>
<reference key="3">
    <citation type="journal article" date="2005" name="PLoS Biol.">
        <title>The genomes of Oryza sativa: a history of duplications.</title>
        <authorList>
            <person name="Yu J."/>
            <person name="Wang J."/>
            <person name="Lin W."/>
            <person name="Li S."/>
            <person name="Li H."/>
            <person name="Zhou J."/>
            <person name="Ni P."/>
            <person name="Dong W."/>
            <person name="Hu S."/>
            <person name="Zeng C."/>
            <person name="Zhang J."/>
            <person name="Zhang Y."/>
            <person name="Li R."/>
            <person name="Xu Z."/>
            <person name="Li S."/>
            <person name="Li X."/>
            <person name="Zheng H."/>
            <person name="Cong L."/>
            <person name="Lin L."/>
            <person name="Yin J."/>
            <person name="Geng J."/>
            <person name="Li G."/>
            <person name="Shi J."/>
            <person name="Liu J."/>
            <person name="Lv H."/>
            <person name="Li J."/>
            <person name="Wang J."/>
            <person name="Deng Y."/>
            <person name="Ran L."/>
            <person name="Shi X."/>
            <person name="Wang X."/>
            <person name="Wu Q."/>
            <person name="Li C."/>
            <person name="Ren X."/>
            <person name="Wang J."/>
            <person name="Wang X."/>
            <person name="Li D."/>
            <person name="Liu D."/>
            <person name="Zhang X."/>
            <person name="Ji Z."/>
            <person name="Zhao W."/>
            <person name="Sun Y."/>
            <person name="Zhang Z."/>
            <person name="Bao J."/>
            <person name="Han Y."/>
            <person name="Dong L."/>
            <person name="Ji J."/>
            <person name="Chen P."/>
            <person name="Wu S."/>
            <person name="Liu J."/>
            <person name="Xiao Y."/>
            <person name="Bu D."/>
            <person name="Tan J."/>
            <person name="Yang L."/>
            <person name="Ye C."/>
            <person name="Zhang J."/>
            <person name="Xu J."/>
            <person name="Zhou Y."/>
            <person name="Yu Y."/>
            <person name="Zhang B."/>
            <person name="Zhuang S."/>
            <person name="Wei H."/>
            <person name="Liu B."/>
            <person name="Lei M."/>
            <person name="Yu H."/>
            <person name="Li Y."/>
            <person name="Xu H."/>
            <person name="Wei S."/>
            <person name="He X."/>
            <person name="Fang L."/>
            <person name="Zhang Z."/>
            <person name="Zhang Y."/>
            <person name="Huang X."/>
            <person name="Su Z."/>
            <person name="Tong W."/>
            <person name="Li J."/>
            <person name="Tong Z."/>
            <person name="Li S."/>
            <person name="Ye J."/>
            <person name="Wang L."/>
            <person name="Fang L."/>
            <person name="Lei T."/>
            <person name="Chen C.-S."/>
            <person name="Chen H.-C."/>
            <person name="Xu Z."/>
            <person name="Li H."/>
            <person name="Huang H."/>
            <person name="Zhang F."/>
            <person name="Xu H."/>
            <person name="Li N."/>
            <person name="Zhao C."/>
            <person name="Li S."/>
            <person name="Dong L."/>
            <person name="Huang Y."/>
            <person name="Li L."/>
            <person name="Xi Y."/>
            <person name="Qi Q."/>
            <person name="Li W."/>
            <person name="Zhang B."/>
            <person name="Hu W."/>
            <person name="Zhang Y."/>
            <person name="Tian X."/>
            <person name="Jiao Y."/>
            <person name="Liang X."/>
            <person name="Jin J."/>
            <person name="Gao L."/>
            <person name="Zheng W."/>
            <person name="Hao B."/>
            <person name="Liu S.-M."/>
            <person name="Wang W."/>
            <person name="Yuan L."/>
            <person name="Cao M."/>
            <person name="McDermott J."/>
            <person name="Samudrala R."/>
            <person name="Wang J."/>
            <person name="Wong G.K.-S."/>
            <person name="Yang H."/>
        </authorList>
    </citation>
    <scope>NUCLEOTIDE SEQUENCE [LARGE SCALE GENOMIC DNA]</scope>
    <source>
        <strain>cv. 93-11</strain>
    </source>
</reference>
<reference key="4">
    <citation type="journal article" date="2008" name="Plant Mol. Biol.">
        <title>A genome-wide survey of HD-Zip genes in rice and analysis of drought-responsive family members.</title>
        <authorList>
            <person name="Agalou A."/>
            <person name="Purwantomo S."/>
            <person name="Oevernaes E."/>
            <person name="Johannesson H."/>
            <person name="Zhu X."/>
            <person name="Estiati A."/>
            <person name="de Kam R.J."/>
            <person name="Engstroem P."/>
            <person name="Slamet-Loedin I.H."/>
            <person name="Zhu Z."/>
            <person name="Wang M."/>
            <person name="Xiong L."/>
            <person name="Meijer A.H."/>
            <person name="Ouwerkerk P.B.F."/>
        </authorList>
    </citation>
    <scope>NUCLEOTIDE SEQUENCE [MRNA] OF 111-249</scope>
    <scope>TISSUE SPECIFICITY</scope>
    <scope>GENE FAMILY</scope>
    <scope>NOMENCLATURE</scope>
    <source>
        <strain>cv. Minghui 86</strain>
    </source>
</reference>
<reference key="5">
    <citation type="journal article" date="2000" name="Mol. Gen. Genet.">
        <title>HD-Zip proteins of families I and II from rice: interactions and functional properties.</title>
        <authorList>
            <person name="Meijer A.H."/>
            <person name="de Kam R.J."/>
            <person name="d'Erfurth I."/>
            <person name="Shen W.-B."/>
            <person name="Hoge J.H.C."/>
        </authorList>
    </citation>
    <scope>FUNCTION</scope>
    <scope>SUBUNIT</scope>
</reference>
<protein>
    <recommendedName>
        <fullName>Homeobox-leucine zipper protein HOX1</fullName>
    </recommendedName>
    <alternativeName>
        <fullName>HD-ZIP protein HOX1</fullName>
    </alternativeName>
    <alternativeName>
        <fullName>Homeodomain transcription factor HOX1</fullName>
    </alternativeName>
    <alternativeName>
        <fullName>OsHox1</fullName>
    </alternativeName>
</protein>
<accession>Q40691</accession>
<accession>A2ZA87</accession>
<accession>A5JPT8</accession>
<name>HOX1_ORYSI</name>
<evidence type="ECO:0000255" key="1">
    <source>
        <dbReference type="PROSITE-ProRule" id="PRU00108"/>
    </source>
</evidence>
<evidence type="ECO:0000256" key="2">
    <source>
        <dbReference type="SAM" id="MobiDB-lite"/>
    </source>
</evidence>
<evidence type="ECO:0000269" key="3">
    <source>
    </source>
</evidence>
<evidence type="ECO:0000269" key="4">
    <source>
    </source>
</evidence>
<evidence type="ECO:0000269" key="5">
    <source>
    </source>
</evidence>
<evidence type="ECO:0000269" key="6">
    <source>
    </source>
</evidence>
<evidence type="ECO:0000305" key="7"/>
<feature type="chain" id="PRO_0000331674" description="Homeobox-leucine zipper protein HOX1">
    <location>
        <begin position="1"/>
        <end position="311"/>
    </location>
</feature>
<feature type="DNA-binding region" description="Homeobox" evidence="1">
    <location>
        <begin position="154"/>
        <end position="213"/>
    </location>
</feature>
<feature type="region of interest" description="Disordered" evidence="2">
    <location>
        <begin position="29"/>
        <end position="69"/>
    </location>
</feature>
<feature type="region of interest" description="Disordered" evidence="2">
    <location>
        <begin position="97"/>
        <end position="160"/>
    </location>
</feature>
<feature type="region of interest" description="Leucine-zipper">
    <location>
        <begin position="212"/>
        <end position="256"/>
    </location>
</feature>
<feature type="region of interest" description="Disordered" evidence="2">
    <location>
        <begin position="279"/>
        <end position="311"/>
    </location>
</feature>
<feature type="compositionally biased region" description="Low complexity" evidence="2">
    <location>
        <begin position="119"/>
        <end position="145"/>
    </location>
</feature>
<feature type="compositionally biased region" description="Polar residues" evidence="2">
    <location>
        <begin position="280"/>
        <end position="289"/>
    </location>
</feature>
<feature type="compositionally biased region" description="Pro residues" evidence="2">
    <location>
        <begin position="294"/>
        <end position="303"/>
    </location>
</feature>
<comment type="function">
    <text evidence="3 4 6">Probable transcription repressor involved leaf development. Binds to the DNA sequence 5'-CAAT[GC]ATTG-3'. May act as a regulatory switch to specify provascular cell fate.</text>
</comment>
<comment type="subunit">
    <text evidence="3 6 7">Homodimer (Probable). May form a heterodimer with HOX2, HOX3 or HOX7.</text>
</comment>
<comment type="subcellular location">
    <subcellularLocation>
        <location evidence="7">Nucleus</location>
    </subcellularLocation>
</comment>
<comment type="tissue specificity">
    <text evidence="4 5 6">Expressed in root provascular and vascular cylinder, provascular and vascular strands of leaves, provascular and vascular strands of the whole panicle, in mature embryo provascular bundles of scutellum and embryonic axis and provascular and vascular strands of young immature spikelet organs. Expressed in differentiating and differentiated xylem and phloem elements, and in outer and inner bundle sheath cells of all vascular bundles. Expressed in auricles, ligules, culm, guard cells brac hairs and pollen.</text>
</comment>
<comment type="induction">
    <text evidence="4">By auxin and sucrose in primary root apical region. By wounding in leaves.</text>
</comment>
<comment type="similarity">
    <text evidence="7">Belongs to the HD-ZIP homeobox family. Class II subfamily.</text>
</comment>
<keyword id="KW-0238">DNA-binding</keyword>
<keyword id="KW-0371">Homeobox</keyword>
<keyword id="KW-0539">Nucleus</keyword>
<keyword id="KW-1185">Reference proteome</keyword>
<keyword id="KW-0678">Repressor</keyword>
<keyword id="KW-0804">Transcription</keyword>
<keyword id="KW-0805">Transcription regulation</keyword>
<dbReference type="EMBL" id="X96681">
    <property type="protein sequence ID" value="CAA65456.2"/>
    <property type="molecule type" value="mRNA"/>
</dbReference>
<dbReference type="EMBL" id="AF211193">
    <property type="protein sequence ID" value="AAF19980.1"/>
    <property type="molecule type" value="Genomic_DNA"/>
</dbReference>
<dbReference type="EMBL" id="CM000135">
    <property type="protein sequence ID" value="EAY79521.1"/>
    <property type="molecule type" value="Genomic_DNA"/>
</dbReference>
<dbReference type="EMBL" id="EF555521">
    <property type="protein sequence ID" value="ABQ57264.1"/>
    <property type="molecule type" value="mRNA"/>
</dbReference>
<dbReference type="PIR" id="T03775">
    <property type="entry name" value="T03775"/>
</dbReference>
<dbReference type="SMR" id="Q40691"/>
<dbReference type="EnsemblPlants" id="BGIOSGA033443-TA">
    <property type="protein sequence ID" value="BGIOSGA033443-PA"/>
    <property type="gene ID" value="BGIOSGA033443"/>
</dbReference>
<dbReference type="EnsemblPlants" id="OsIR64_10g0019910.01">
    <property type="protein sequence ID" value="OsIR64_10g0019910.01"/>
    <property type="gene ID" value="OsIR64_10g0019910"/>
</dbReference>
<dbReference type="EnsemblPlants" id="OsLaMu_10g0020180.01">
    <property type="protein sequence ID" value="OsLaMu_10g0020180.01"/>
    <property type="gene ID" value="OsLaMu_10g0020180"/>
</dbReference>
<dbReference type="EnsemblPlants" id="OsMH63_10G019940_01">
    <property type="protein sequence ID" value="OsMH63_10G019940_01"/>
    <property type="gene ID" value="OsMH63_10G019940"/>
</dbReference>
<dbReference type="EnsemblPlants" id="OsPr106_10g0020090.01">
    <property type="protein sequence ID" value="OsPr106_10g0020090.01"/>
    <property type="gene ID" value="OsPr106_10g0020090"/>
</dbReference>
<dbReference type="EnsemblPlants" id="OsZS97_10G020010_01">
    <property type="protein sequence ID" value="OsZS97_10G020010_01"/>
    <property type="gene ID" value="OsZS97_10G020010"/>
</dbReference>
<dbReference type="Gramene" id="BGIOSGA033443-TA">
    <property type="protein sequence ID" value="BGIOSGA033443-PA"/>
    <property type="gene ID" value="BGIOSGA033443"/>
</dbReference>
<dbReference type="Gramene" id="OsIR64_10g0019910.01">
    <property type="protein sequence ID" value="OsIR64_10g0019910.01"/>
    <property type="gene ID" value="OsIR64_10g0019910"/>
</dbReference>
<dbReference type="Gramene" id="OsLaMu_10g0020180.01">
    <property type="protein sequence ID" value="OsLaMu_10g0020180.01"/>
    <property type="gene ID" value="OsLaMu_10g0020180"/>
</dbReference>
<dbReference type="Gramene" id="OsMH63_10G019940_01">
    <property type="protein sequence ID" value="OsMH63_10G019940_01"/>
    <property type="gene ID" value="OsMH63_10G019940"/>
</dbReference>
<dbReference type="Gramene" id="OsPr106_10g0020090.01">
    <property type="protein sequence ID" value="OsPr106_10g0020090.01"/>
    <property type="gene ID" value="OsPr106_10g0020090"/>
</dbReference>
<dbReference type="Gramene" id="OsZS97_10G020010_01">
    <property type="protein sequence ID" value="OsZS97_10G020010_01"/>
    <property type="gene ID" value="OsZS97_10G020010"/>
</dbReference>
<dbReference type="HOGENOM" id="CLU_049516_2_0_1"/>
<dbReference type="OMA" id="AAPHHLY"/>
<dbReference type="Proteomes" id="UP000007015">
    <property type="component" value="Chromosome 10"/>
</dbReference>
<dbReference type="GO" id="GO:0005634">
    <property type="term" value="C:nucleus"/>
    <property type="evidence" value="ECO:0007669"/>
    <property type="project" value="UniProtKB-SubCell"/>
</dbReference>
<dbReference type="GO" id="GO:0000981">
    <property type="term" value="F:DNA-binding transcription factor activity, RNA polymerase II-specific"/>
    <property type="evidence" value="ECO:0007669"/>
    <property type="project" value="InterPro"/>
</dbReference>
<dbReference type="GO" id="GO:0043565">
    <property type="term" value="F:sequence-specific DNA binding"/>
    <property type="evidence" value="ECO:0007669"/>
    <property type="project" value="InterPro"/>
</dbReference>
<dbReference type="CDD" id="cd00086">
    <property type="entry name" value="homeodomain"/>
    <property type="match status" value="1"/>
</dbReference>
<dbReference type="FunFam" id="1.10.10.60:FF:000577">
    <property type="entry name" value="Homeobox-leucine zipper protein 18"/>
    <property type="match status" value="1"/>
</dbReference>
<dbReference type="Gene3D" id="1.10.10.60">
    <property type="entry name" value="Homeodomain-like"/>
    <property type="match status" value="1"/>
</dbReference>
<dbReference type="InterPro" id="IPR001356">
    <property type="entry name" value="HD"/>
</dbReference>
<dbReference type="InterPro" id="IPR050762">
    <property type="entry name" value="HD-ZIP_Homeobox_LZ_Class_II"/>
</dbReference>
<dbReference type="InterPro" id="IPR006712">
    <property type="entry name" value="HD-ZIP_N"/>
</dbReference>
<dbReference type="InterPro" id="IPR017970">
    <property type="entry name" value="Homeobox_CS"/>
</dbReference>
<dbReference type="InterPro" id="IPR009057">
    <property type="entry name" value="Homeodomain-like_sf"/>
</dbReference>
<dbReference type="InterPro" id="IPR003106">
    <property type="entry name" value="Leu_zip_homeo"/>
</dbReference>
<dbReference type="PANTHER" id="PTHR45714">
    <property type="entry name" value="HOMEOBOX-LEUCINE ZIPPER PROTEIN HAT14"/>
    <property type="match status" value="1"/>
</dbReference>
<dbReference type="PANTHER" id="PTHR45714:SF88">
    <property type="entry name" value="HOMEOBOX-LEUCINE ZIPPER PROTEIN HAT4"/>
    <property type="match status" value="1"/>
</dbReference>
<dbReference type="Pfam" id="PF02183">
    <property type="entry name" value="HALZ"/>
    <property type="match status" value="1"/>
</dbReference>
<dbReference type="Pfam" id="PF04618">
    <property type="entry name" value="HD-ZIP_N"/>
    <property type="match status" value="1"/>
</dbReference>
<dbReference type="Pfam" id="PF00046">
    <property type="entry name" value="Homeodomain"/>
    <property type="match status" value="1"/>
</dbReference>
<dbReference type="SMART" id="SM00340">
    <property type="entry name" value="HALZ"/>
    <property type="match status" value="1"/>
</dbReference>
<dbReference type="SMART" id="SM00389">
    <property type="entry name" value="HOX"/>
    <property type="match status" value="1"/>
</dbReference>
<dbReference type="SUPFAM" id="SSF46689">
    <property type="entry name" value="Homeodomain-like"/>
    <property type="match status" value="1"/>
</dbReference>
<dbReference type="PROSITE" id="PS00027">
    <property type="entry name" value="HOMEOBOX_1"/>
    <property type="match status" value="1"/>
</dbReference>
<dbReference type="PROSITE" id="PS50071">
    <property type="entry name" value="HOMEOBOX_2"/>
    <property type="match status" value="1"/>
</dbReference>